<keyword id="KW-0030">Aminoacyl-tRNA synthetase</keyword>
<keyword id="KW-0067">ATP-binding</keyword>
<keyword id="KW-0963">Cytoplasm</keyword>
<keyword id="KW-0436">Ligase</keyword>
<keyword id="KW-0479">Metal-binding</keyword>
<keyword id="KW-0547">Nucleotide-binding</keyword>
<keyword id="KW-0648">Protein biosynthesis</keyword>
<keyword id="KW-1185">Reference proteome</keyword>
<keyword id="KW-0694">RNA-binding</keyword>
<keyword id="KW-0820">tRNA-binding</keyword>
<keyword id="KW-0862">Zinc</keyword>
<accession>B8F5H9</accession>
<feature type="chain" id="PRO_1000199553" description="Threonine--tRNA ligase">
    <location>
        <begin position="1"/>
        <end position="643"/>
    </location>
</feature>
<feature type="domain" description="TGS" evidence="2">
    <location>
        <begin position="1"/>
        <end position="61"/>
    </location>
</feature>
<feature type="region of interest" description="Catalytic" evidence="1">
    <location>
        <begin position="243"/>
        <end position="534"/>
    </location>
</feature>
<feature type="binding site" evidence="1">
    <location>
        <position position="334"/>
    </location>
    <ligand>
        <name>Zn(2+)</name>
        <dbReference type="ChEBI" id="CHEBI:29105"/>
    </ligand>
</feature>
<feature type="binding site" evidence="1">
    <location>
        <position position="385"/>
    </location>
    <ligand>
        <name>Zn(2+)</name>
        <dbReference type="ChEBI" id="CHEBI:29105"/>
    </ligand>
</feature>
<feature type="binding site" evidence="1">
    <location>
        <position position="511"/>
    </location>
    <ligand>
        <name>Zn(2+)</name>
        <dbReference type="ChEBI" id="CHEBI:29105"/>
    </ligand>
</feature>
<dbReference type="EC" id="6.1.1.3" evidence="1"/>
<dbReference type="EMBL" id="CP001321">
    <property type="protein sequence ID" value="ACL32581.1"/>
    <property type="molecule type" value="Genomic_DNA"/>
</dbReference>
<dbReference type="RefSeq" id="WP_010786359.1">
    <property type="nucleotide sequence ID" value="NC_011852.1"/>
</dbReference>
<dbReference type="SMR" id="B8F5H9"/>
<dbReference type="STRING" id="557723.HAPS_0954"/>
<dbReference type="KEGG" id="hap:HAPS_0954"/>
<dbReference type="PATRIC" id="fig|557723.8.peg.951"/>
<dbReference type="HOGENOM" id="CLU_008554_0_1_6"/>
<dbReference type="Proteomes" id="UP000006743">
    <property type="component" value="Chromosome"/>
</dbReference>
<dbReference type="GO" id="GO:0005829">
    <property type="term" value="C:cytosol"/>
    <property type="evidence" value="ECO:0007669"/>
    <property type="project" value="TreeGrafter"/>
</dbReference>
<dbReference type="GO" id="GO:0005524">
    <property type="term" value="F:ATP binding"/>
    <property type="evidence" value="ECO:0007669"/>
    <property type="project" value="UniProtKB-UniRule"/>
</dbReference>
<dbReference type="GO" id="GO:0046872">
    <property type="term" value="F:metal ion binding"/>
    <property type="evidence" value="ECO:0007669"/>
    <property type="project" value="UniProtKB-KW"/>
</dbReference>
<dbReference type="GO" id="GO:0004829">
    <property type="term" value="F:threonine-tRNA ligase activity"/>
    <property type="evidence" value="ECO:0007669"/>
    <property type="project" value="UniProtKB-UniRule"/>
</dbReference>
<dbReference type="GO" id="GO:0000049">
    <property type="term" value="F:tRNA binding"/>
    <property type="evidence" value="ECO:0007669"/>
    <property type="project" value="UniProtKB-KW"/>
</dbReference>
<dbReference type="GO" id="GO:0006435">
    <property type="term" value="P:threonyl-tRNA aminoacylation"/>
    <property type="evidence" value="ECO:0007669"/>
    <property type="project" value="UniProtKB-UniRule"/>
</dbReference>
<dbReference type="CDD" id="cd01667">
    <property type="entry name" value="TGS_ThrRS"/>
    <property type="match status" value="1"/>
</dbReference>
<dbReference type="CDD" id="cd00860">
    <property type="entry name" value="ThrRS_anticodon"/>
    <property type="match status" value="1"/>
</dbReference>
<dbReference type="CDD" id="cd00771">
    <property type="entry name" value="ThrRS_core"/>
    <property type="match status" value="1"/>
</dbReference>
<dbReference type="FunFam" id="3.10.20.30:FF:000005">
    <property type="entry name" value="Threonine--tRNA ligase"/>
    <property type="match status" value="1"/>
</dbReference>
<dbReference type="FunFam" id="3.30.54.20:FF:000002">
    <property type="entry name" value="Threonine--tRNA ligase"/>
    <property type="match status" value="1"/>
</dbReference>
<dbReference type="FunFam" id="3.30.930.10:FF:000002">
    <property type="entry name" value="Threonine--tRNA ligase"/>
    <property type="match status" value="1"/>
</dbReference>
<dbReference type="FunFam" id="3.40.50.800:FF:000001">
    <property type="entry name" value="Threonine--tRNA ligase"/>
    <property type="match status" value="1"/>
</dbReference>
<dbReference type="FunFam" id="3.30.980.10:FF:000005">
    <property type="entry name" value="Threonyl-tRNA synthetase, mitochondrial"/>
    <property type="match status" value="1"/>
</dbReference>
<dbReference type="Gene3D" id="3.10.20.30">
    <property type="match status" value="1"/>
</dbReference>
<dbReference type="Gene3D" id="3.30.54.20">
    <property type="match status" value="1"/>
</dbReference>
<dbReference type="Gene3D" id="3.40.50.800">
    <property type="entry name" value="Anticodon-binding domain"/>
    <property type="match status" value="1"/>
</dbReference>
<dbReference type="Gene3D" id="3.30.930.10">
    <property type="entry name" value="Bira Bifunctional Protein, Domain 2"/>
    <property type="match status" value="1"/>
</dbReference>
<dbReference type="Gene3D" id="3.30.980.10">
    <property type="entry name" value="Threonyl-trna Synthetase, Chain A, domain 2"/>
    <property type="match status" value="1"/>
</dbReference>
<dbReference type="HAMAP" id="MF_00184">
    <property type="entry name" value="Thr_tRNA_synth"/>
    <property type="match status" value="1"/>
</dbReference>
<dbReference type="InterPro" id="IPR002314">
    <property type="entry name" value="aa-tRNA-synt_IIb"/>
</dbReference>
<dbReference type="InterPro" id="IPR006195">
    <property type="entry name" value="aa-tRNA-synth_II"/>
</dbReference>
<dbReference type="InterPro" id="IPR045864">
    <property type="entry name" value="aa-tRNA-synth_II/BPL/LPL"/>
</dbReference>
<dbReference type="InterPro" id="IPR004154">
    <property type="entry name" value="Anticodon-bd"/>
</dbReference>
<dbReference type="InterPro" id="IPR036621">
    <property type="entry name" value="Anticodon-bd_dom_sf"/>
</dbReference>
<dbReference type="InterPro" id="IPR012675">
    <property type="entry name" value="Beta-grasp_dom_sf"/>
</dbReference>
<dbReference type="InterPro" id="IPR004095">
    <property type="entry name" value="TGS"/>
</dbReference>
<dbReference type="InterPro" id="IPR012676">
    <property type="entry name" value="TGS-like"/>
</dbReference>
<dbReference type="InterPro" id="IPR002320">
    <property type="entry name" value="Thr-tRNA-ligase_IIa"/>
</dbReference>
<dbReference type="InterPro" id="IPR018163">
    <property type="entry name" value="Thr/Ala-tRNA-synth_IIc_edit"/>
</dbReference>
<dbReference type="InterPro" id="IPR047246">
    <property type="entry name" value="ThrRS_anticodon"/>
</dbReference>
<dbReference type="InterPro" id="IPR033728">
    <property type="entry name" value="ThrRS_core"/>
</dbReference>
<dbReference type="InterPro" id="IPR012947">
    <property type="entry name" value="tRNA_SAD"/>
</dbReference>
<dbReference type="NCBIfam" id="TIGR00418">
    <property type="entry name" value="thrS"/>
    <property type="match status" value="1"/>
</dbReference>
<dbReference type="PANTHER" id="PTHR11451:SF44">
    <property type="entry name" value="THREONINE--TRNA LIGASE, CHLOROPLASTIC_MITOCHONDRIAL 2"/>
    <property type="match status" value="1"/>
</dbReference>
<dbReference type="PANTHER" id="PTHR11451">
    <property type="entry name" value="THREONINE-TRNA LIGASE"/>
    <property type="match status" value="1"/>
</dbReference>
<dbReference type="Pfam" id="PF03129">
    <property type="entry name" value="HGTP_anticodon"/>
    <property type="match status" value="1"/>
</dbReference>
<dbReference type="Pfam" id="PF02824">
    <property type="entry name" value="TGS"/>
    <property type="match status" value="1"/>
</dbReference>
<dbReference type="Pfam" id="PF00587">
    <property type="entry name" value="tRNA-synt_2b"/>
    <property type="match status" value="1"/>
</dbReference>
<dbReference type="Pfam" id="PF07973">
    <property type="entry name" value="tRNA_SAD"/>
    <property type="match status" value="1"/>
</dbReference>
<dbReference type="PRINTS" id="PR01047">
    <property type="entry name" value="TRNASYNTHTHR"/>
</dbReference>
<dbReference type="SMART" id="SM00863">
    <property type="entry name" value="tRNA_SAD"/>
    <property type="match status" value="1"/>
</dbReference>
<dbReference type="SUPFAM" id="SSF52954">
    <property type="entry name" value="Class II aaRS ABD-related"/>
    <property type="match status" value="1"/>
</dbReference>
<dbReference type="SUPFAM" id="SSF55681">
    <property type="entry name" value="Class II aaRS and biotin synthetases"/>
    <property type="match status" value="1"/>
</dbReference>
<dbReference type="SUPFAM" id="SSF81271">
    <property type="entry name" value="TGS-like"/>
    <property type="match status" value="1"/>
</dbReference>
<dbReference type="SUPFAM" id="SSF55186">
    <property type="entry name" value="ThrRS/AlaRS common domain"/>
    <property type="match status" value="1"/>
</dbReference>
<dbReference type="PROSITE" id="PS50862">
    <property type="entry name" value="AA_TRNA_LIGASE_II"/>
    <property type="match status" value="1"/>
</dbReference>
<dbReference type="PROSITE" id="PS51880">
    <property type="entry name" value="TGS"/>
    <property type="match status" value="1"/>
</dbReference>
<proteinExistence type="inferred from homology"/>
<comment type="function">
    <text evidence="1">Catalyzes the attachment of threonine to tRNA(Thr) in a two-step reaction: L-threonine is first activated by ATP to form Thr-AMP and then transferred to the acceptor end of tRNA(Thr). Also edits incorrectly charged L-seryl-tRNA(Thr).</text>
</comment>
<comment type="catalytic activity">
    <reaction evidence="1">
        <text>tRNA(Thr) + L-threonine + ATP = L-threonyl-tRNA(Thr) + AMP + diphosphate + H(+)</text>
        <dbReference type="Rhea" id="RHEA:24624"/>
        <dbReference type="Rhea" id="RHEA-COMP:9670"/>
        <dbReference type="Rhea" id="RHEA-COMP:9704"/>
        <dbReference type="ChEBI" id="CHEBI:15378"/>
        <dbReference type="ChEBI" id="CHEBI:30616"/>
        <dbReference type="ChEBI" id="CHEBI:33019"/>
        <dbReference type="ChEBI" id="CHEBI:57926"/>
        <dbReference type="ChEBI" id="CHEBI:78442"/>
        <dbReference type="ChEBI" id="CHEBI:78534"/>
        <dbReference type="ChEBI" id="CHEBI:456215"/>
        <dbReference type="EC" id="6.1.1.3"/>
    </reaction>
</comment>
<comment type="cofactor">
    <cofactor evidence="1">
        <name>Zn(2+)</name>
        <dbReference type="ChEBI" id="CHEBI:29105"/>
    </cofactor>
    <text evidence="1">Binds 1 zinc ion per subunit.</text>
</comment>
<comment type="subunit">
    <text evidence="1">Homodimer.</text>
</comment>
<comment type="subcellular location">
    <subcellularLocation>
        <location evidence="1">Cytoplasm</location>
    </subcellularLocation>
</comment>
<comment type="similarity">
    <text evidence="1">Belongs to the class-II aminoacyl-tRNA synthetase family.</text>
</comment>
<evidence type="ECO:0000255" key="1">
    <source>
        <dbReference type="HAMAP-Rule" id="MF_00184"/>
    </source>
</evidence>
<evidence type="ECO:0000255" key="2">
    <source>
        <dbReference type="PROSITE-ProRule" id="PRU01228"/>
    </source>
</evidence>
<organism>
    <name type="scientific">Glaesserella parasuis serovar 5 (strain SH0165)</name>
    <name type="common">Haemophilus parasuis</name>
    <dbReference type="NCBI Taxonomy" id="557723"/>
    <lineage>
        <taxon>Bacteria</taxon>
        <taxon>Pseudomonadati</taxon>
        <taxon>Pseudomonadota</taxon>
        <taxon>Gammaproteobacteria</taxon>
        <taxon>Pasteurellales</taxon>
        <taxon>Pasteurellaceae</taxon>
        <taxon>Glaesserella</taxon>
    </lineage>
</organism>
<gene>
    <name evidence="1" type="primary">thrS</name>
    <name type="ordered locus">HAPS_0954</name>
</gene>
<reference key="1">
    <citation type="journal article" date="2009" name="J. Bacteriol.">
        <title>Complete genome sequence of Haemophilus parasuis SH0165.</title>
        <authorList>
            <person name="Yue M."/>
            <person name="Yang F."/>
            <person name="Yang J."/>
            <person name="Bei W."/>
            <person name="Cai X."/>
            <person name="Chen L."/>
            <person name="Dong J."/>
            <person name="Zhou R."/>
            <person name="Jin M."/>
            <person name="Jin Q."/>
            <person name="Chen H."/>
        </authorList>
    </citation>
    <scope>NUCLEOTIDE SEQUENCE [LARGE SCALE GENOMIC DNA]</scope>
    <source>
        <strain>SH0165</strain>
    </source>
</reference>
<name>SYT_GLAP5</name>
<sequence>MPIITLPDGSQRQFDNPVSVMEVAQSIGAGLAKATIAGRVNGERRDASDIISEDATLEIITAKDEDGLEIIRHSTAHLLGHAIKQLFPNVKMAIGPTIDNGFYYDIDLDRSLTQEDLDALEARMLELAKTNYDVVKKRVSWQEARDTFESRGESYKMAILDENISKDDRPALYHHEEYIDMCRGPHVPNMRFCHHFKLQKVAGAYWRGDSKNKMLQRIYGTAWADKKQLADYLHRLEEAAKRDHRKIGKALDLYHMQEEAPGMVFWHNDGWTIFRELETFVRTKLKQYDYQEVKGPFMMDRVLWEKTGHWQNYGDLMFTTQSENREYAIKPMNCPGHIQIFNQGLKSYRDLPLRMAEFGSCHRNEPSGSLHGLMRVRGFTQDDAHIFCMPEQVESEVTSCIKMVYDIYSTFGFENIQVKLSTRPANSIGTDEMWNKAEADLAAALTANGLAFEIQEGEGAFYGPKIEFALRDCLDREWQCGTIQLDFFLPERLSASYVAEDNDRKTPVMIHRAILGSIERFIGIITEEYAGFFPAWLAPVQAVVMNITDSQAEYVQQVVKQLSDAGLRVKADLRNEKVGFKVREHTLRRVPYMLVCGDKEIAEGKVSVRTRKGADLGTYKVEEFVEMLKKQVRGRELKLLGEE</sequence>
<protein>
    <recommendedName>
        <fullName evidence="1">Threonine--tRNA ligase</fullName>
        <ecNumber evidence="1">6.1.1.3</ecNumber>
    </recommendedName>
    <alternativeName>
        <fullName evidence="1">Threonyl-tRNA synthetase</fullName>
        <shortName evidence="1">ThrRS</shortName>
    </alternativeName>
</protein>